<accession>P18091</accession>
<accession>O46044</accession>
<accession>O46045</accession>
<accession>Q24370</accession>
<accession>Q8T024</accession>
<accession>Q9W536</accession>
<accession>Q9W537</accession>
<feature type="chain" id="PRO_0000073447" description="Alpha-actinin, sarcomeric">
    <location>
        <begin position="1"/>
        <end position="924"/>
    </location>
</feature>
<feature type="domain" description="Calponin-homology (CH) 1" evidence="1">
    <location>
        <begin position="34"/>
        <end position="138"/>
    </location>
</feature>
<feature type="domain" description="Calponin-homology (CH) 2" evidence="1">
    <location>
        <begin position="147"/>
        <end position="253"/>
    </location>
</feature>
<feature type="repeat" description="Spectrin 1">
    <location>
        <begin position="251"/>
        <end position="395"/>
    </location>
</feature>
<feature type="repeat" description="Spectrin 2">
    <location>
        <begin position="396"/>
        <end position="510"/>
    </location>
</feature>
<feature type="repeat" description="Spectrin 3">
    <location>
        <begin position="511"/>
        <end position="631"/>
    </location>
</feature>
<feature type="repeat" description="Spectrin 4">
    <location>
        <begin position="632"/>
        <end position="744"/>
    </location>
</feature>
<feature type="domain" description="EF-hand 1" evidence="2">
    <location>
        <begin position="778"/>
        <end position="813"/>
    </location>
</feature>
<feature type="domain" description="EF-hand 2" evidence="2">
    <location>
        <begin position="819"/>
        <end position="854"/>
    </location>
</feature>
<feature type="region of interest" description="Actin-binding">
    <location>
        <begin position="1"/>
        <end position="250"/>
    </location>
</feature>
<feature type="binding site" evidence="2">
    <location>
        <position position="791"/>
    </location>
    <ligand>
        <name>Ca(2+)</name>
        <dbReference type="ChEBI" id="CHEBI:29108"/>
    </ligand>
</feature>
<feature type="binding site" evidence="2">
    <location>
        <position position="793"/>
    </location>
    <ligand>
        <name>Ca(2+)</name>
        <dbReference type="ChEBI" id="CHEBI:29108"/>
    </ligand>
</feature>
<feature type="binding site" evidence="2">
    <location>
        <position position="795"/>
    </location>
    <ligand>
        <name>Ca(2+)</name>
        <dbReference type="ChEBI" id="CHEBI:29108"/>
    </ligand>
</feature>
<feature type="binding site" evidence="2">
    <location>
        <position position="797"/>
    </location>
    <ligand>
        <name>Ca(2+)</name>
        <dbReference type="ChEBI" id="CHEBI:29108"/>
    </ligand>
</feature>
<feature type="binding site" evidence="2">
    <location>
        <position position="802"/>
    </location>
    <ligand>
        <name>Ca(2+)</name>
        <dbReference type="ChEBI" id="CHEBI:29108"/>
    </ligand>
</feature>
<feature type="splice variant" id="VSP_000712" description="In isoform Non-muscle." evidence="7">
    <location>
        <begin position="229"/>
        <end position="260"/>
    </location>
</feature>
<feature type="splice variant" id="VSP_000713" description="In isoform A." evidence="6">
    <original>INTPKPDERAIMTYVSCYYHAFQGAQQVGN</original>
    <variation>Q</variation>
    <location>
        <begin position="231"/>
        <end position="260"/>
    </location>
</feature>
<feature type="splice variant" id="VSP_000715" description="In isoform Adult muscle." evidence="8">
    <location>
        <begin position="258"/>
        <end position="286"/>
    </location>
</feature>
<feature type="splice variant" id="VSP_000716" description="In isoform Larval muscle." evidence="9">
    <original>NTALPDERAVMTYVSSYYHCFSGAQK</original>
    <variation>VTHVPEPTRQYTYVPNNYN</variation>
    <location>
        <begin position="261"/>
        <end position="286"/>
    </location>
</feature>
<feature type="splice variant" id="VSP_000714" description="In isoform Non-muscle." evidence="7">
    <original>N</original>
    <variation>Q</variation>
    <location>
        <position position="261"/>
    </location>
</feature>
<feature type="sequence conflict" description="In Ref. 1; CAA36042." evidence="9" ref="1">
    <original>A</original>
    <variation>G</variation>
    <location>
        <position position="409"/>
    </location>
</feature>
<feature type="sequence conflict" description="In Ref. 1; CAA36042." evidence="9" ref="1">
    <original>C</original>
    <variation>Y</variation>
    <location>
        <position position="457"/>
    </location>
</feature>
<feature type="sequence conflict" description="In Ref. 1; CAA36042." evidence="9" ref="1">
    <original>S</original>
    <variation>C</variation>
    <location>
        <position position="474"/>
    </location>
</feature>
<feature type="sequence conflict" description="In Ref. 1; CAA36042." evidence="9" ref="1">
    <original>S</original>
    <variation>C</variation>
    <location>
        <position position="503"/>
    </location>
</feature>
<feature type="sequence conflict" description="In Ref. 1; CAA36042." evidence="9" ref="1">
    <original>E</original>
    <variation>V</variation>
    <location>
        <position position="574"/>
    </location>
</feature>
<feature type="sequence conflict" description="In Ref. 1; CAA36042." evidence="9" ref="1">
    <original>L</original>
    <variation>R</variation>
    <location>
        <position position="654"/>
    </location>
</feature>
<feature type="sequence conflict" description="In Ref. 1; CAA36042." evidence="9" ref="1">
    <original>AVTAIGMG</original>
    <variation>VVTPLVWD</variation>
    <location>
        <begin position="684"/>
        <end position="691"/>
    </location>
</feature>
<feature type="sequence conflict" description="In Ref. 1; CAA36042." evidence="9" ref="1">
    <original>Y</original>
    <variation>H</variation>
    <location>
        <position position="711"/>
    </location>
</feature>
<feature type="sequence conflict" description="In Ref. 1; CAA36042." evidence="9" ref="1">
    <original>D</original>
    <variation>E</variation>
    <location>
        <position position="817"/>
    </location>
</feature>
<keyword id="KW-0009">Actin-binding</keyword>
<keyword id="KW-0025">Alternative splicing</keyword>
<keyword id="KW-0106">Calcium</keyword>
<keyword id="KW-0963">Cytoplasm</keyword>
<keyword id="KW-0479">Metal-binding</keyword>
<keyword id="KW-1185">Reference proteome</keyword>
<keyword id="KW-0677">Repeat</keyword>
<sequence length="924" mass="107019">MMMENGLSMEYGDGYMEQEEEWEREGLLDPAWEKQQKKTFTAWCNSHLRKAGTAIDNIEEDFRNGLKLMLLLEVISGETLPKPDRGKMRFHKIANVNKALDFIASKGVHLVSIGAEEIVDGNLKMTLGMIWTIILRFAIQDISVEEMTAKEGLLLWCQRKTAPYKNVNVQNFHLSFKDGLAFCALIHRHRPDLIDYAKLSKDNPLENLNTAFDVAEKYLDIPRMLDPDDLINTPKPDERAIMTYVSCYYHAFQGAQQVGNNTALPDERAVMTYVSSYYHCFSGAQKAETAANRICKVLKVNQENERLMEEYERLASDLLEWIRRTMPWLNSRQADNSLAGVQKKLEEYRTYRRKHKPPRVEQKAKLETNFNTLQTKLRLSNRPAYLPTEGKTVSDISNSWKGLELAEKAFEEWLLAETMRLERLEHLAQKFKHKADAHEDWTRGKEEMLQSQDFRQCKLNELKALKKKHEAFESDLAAHQDRVEQIAAIAQELNTLEYHDCVSVNARCQRICDQWDRLGALTQRRRTALDEAERILEKIDILHLEFAKRAAPFNNWLDGTREDLVDMFIVHTMEEIQGLIQAHDQFKATLGEADKEFNLIVNLVREVESIVKQHQIPGGLENPYTTLTANDMTRKWSDVRQLVPQRDQTLANELRKQQNNEMLRRQFAEKANIVGPWIERQMDAVTAIGMGLQGSLEDQLHRLKEYEQAVYAYKPNIEELEKIHQAVQESMIFENRYTNYTMETLRVGWEQLLTSINRNINEVENQILTRDSKGISQEQLNEFRSSFNHFDKNRTGRLSPEEFKSCLVSLGYSIGKDRQGDLDFQRILAVVDPNNTGYVHFDAFLDFMTRESTDTDTAEQVIDSFRILAADKPYILPDELRRELPPDQAEYCIQRMPPYKGPNGVPGALDYMSFSTALYGETDL</sequence>
<dbReference type="EMBL" id="X51753">
    <property type="protein sequence ID" value="CAA36042.1"/>
    <property type="molecule type" value="mRNA"/>
</dbReference>
<dbReference type="EMBL" id="AE014298">
    <property type="protein sequence ID" value="AAF45705.2"/>
    <property type="molecule type" value="Genomic_DNA"/>
</dbReference>
<dbReference type="EMBL" id="AE014298">
    <property type="protein sequence ID" value="AAF45706.2"/>
    <property type="molecule type" value="Genomic_DNA"/>
</dbReference>
<dbReference type="EMBL" id="AE014298">
    <property type="protein sequence ID" value="AAN09068.1"/>
    <property type="molecule type" value="Genomic_DNA"/>
</dbReference>
<dbReference type="EMBL" id="AL009192">
    <property type="protein sequence ID" value="CAA15688.1"/>
    <property type="molecule type" value="Genomic_DNA"/>
</dbReference>
<dbReference type="EMBL" id="AL031765">
    <property type="protein sequence ID" value="CAA15688.1"/>
    <property type="status" value="JOINED"/>
    <property type="molecule type" value="Genomic_DNA"/>
</dbReference>
<dbReference type="EMBL" id="AL009192">
    <property type="protein sequence ID" value="CAA15689.1"/>
    <property type="molecule type" value="Genomic_DNA"/>
</dbReference>
<dbReference type="EMBL" id="AL031765">
    <property type="protein sequence ID" value="CAA15689.1"/>
    <property type="status" value="JOINED"/>
    <property type="molecule type" value="Genomic_DNA"/>
</dbReference>
<dbReference type="EMBL" id="AL031765">
    <property type="protein sequence ID" value="CAA21120.1"/>
    <property type="molecule type" value="Genomic_DNA"/>
</dbReference>
<dbReference type="EMBL" id="AL009192">
    <property type="protein sequence ID" value="CAA21120.1"/>
    <property type="status" value="JOINED"/>
    <property type="molecule type" value="Genomic_DNA"/>
</dbReference>
<dbReference type="EMBL" id="AL031765">
    <property type="protein sequence ID" value="CAA21121.1"/>
    <property type="molecule type" value="Genomic_DNA"/>
</dbReference>
<dbReference type="EMBL" id="AL009192">
    <property type="protein sequence ID" value="CAA21121.1"/>
    <property type="status" value="JOINED"/>
    <property type="molecule type" value="Genomic_DNA"/>
</dbReference>
<dbReference type="EMBL" id="AY069615">
    <property type="protein sequence ID" value="AAL39760.1"/>
    <property type="molecule type" value="mRNA"/>
</dbReference>
<dbReference type="EMBL" id="X64419">
    <property type="protein sequence ID" value="CAA45764.1"/>
    <property type="molecule type" value="mRNA"/>
</dbReference>
<dbReference type="PIR" id="A35598">
    <property type="entry name" value="FAFFAA"/>
</dbReference>
<dbReference type="PIR" id="T13413">
    <property type="entry name" value="T13413"/>
</dbReference>
<dbReference type="PIR" id="T13414">
    <property type="entry name" value="T13414"/>
</dbReference>
<dbReference type="RefSeq" id="NP_001188532.1">
    <molecule id="P18091-4"/>
    <property type="nucleotide sequence ID" value="NM_001201603.2"/>
</dbReference>
<dbReference type="RefSeq" id="NP_001188533.1">
    <molecule id="P18091-4"/>
    <property type="nucleotide sequence ID" value="NM_001201604.2"/>
</dbReference>
<dbReference type="RefSeq" id="NP_001259165.1">
    <molecule id="P18091-3"/>
    <property type="nucleotide sequence ID" value="NM_001272236.1"/>
</dbReference>
<dbReference type="RefSeq" id="NP_001259166.1">
    <molecule id="P18091-3"/>
    <property type="nucleotide sequence ID" value="NM_001272237.1"/>
</dbReference>
<dbReference type="RefSeq" id="NP_001259167.1">
    <molecule id="P18091-3"/>
    <property type="nucleotide sequence ID" value="NM_001272238.1"/>
</dbReference>
<dbReference type="RefSeq" id="NP_477484.2">
    <molecule id="P18091-5"/>
    <property type="nucleotide sequence ID" value="NM_058136.4"/>
</dbReference>
<dbReference type="RefSeq" id="NP_477485.1">
    <molecule id="P18091-3"/>
    <property type="nucleotide sequence ID" value="NM_058137.6"/>
</dbReference>
<dbReference type="RefSeq" id="NP_726784.1">
    <molecule id="P18091-4"/>
    <property type="nucleotide sequence ID" value="NM_166920.2"/>
</dbReference>
<dbReference type="SMR" id="P18091"/>
<dbReference type="BioGRID" id="57710">
    <property type="interactions" value="46"/>
</dbReference>
<dbReference type="DIP" id="DIP-22313N"/>
<dbReference type="FunCoup" id="P18091">
    <property type="interactions" value="349"/>
</dbReference>
<dbReference type="IntAct" id="P18091">
    <property type="interactions" value="72"/>
</dbReference>
<dbReference type="STRING" id="7227.FBpp0070331"/>
<dbReference type="PaxDb" id="7227-FBpp0070331"/>
<dbReference type="EnsemblMetazoa" id="FBtr0070343">
    <molecule id="P18091-4"/>
    <property type="protein sequence ID" value="FBpp0070329"/>
    <property type="gene ID" value="FBgn0000667"/>
</dbReference>
<dbReference type="EnsemblMetazoa" id="FBtr0070344">
    <molecule id="P18091-5"/>
    <property type="protein sequence ID" value="FBpp0070330"/>
    <property type="gene ID" value="FBgn0000667"/>
</dbReference>
<dbReference type="EnsemblMetazoa" id="FBtr0070345">
    <molecule id="P18091-3"/>
    <property type="protein sequence ID" value="FBpp0070331"/>
    <property type="gene ID" value="FBgn0000667"/>
</dbReference>
<dbReference type="EnsemblMetazoa" id="FBtr0303048">
    <molecule id="P18091-4"/>
    <property type="protein sequence ID" value="FBpp0292167"/>
    <property type="gene ID" value="FBgn0000667"/>
</dbReference>
<dbReference type="EnsemblMetazoa" id="FBtr0310658">
    <molecule id="P18091-3"/>
    <property type="protein sequence ID" value="FBpp0302778"/>
    <property type="gene ID" value="FBgn0000667"/>
</dbReference>
<dbReference type="EnsemblMetazoa" id="FBtr0310659">
    <molecule id="P18091-3"/>
    <property type="protein sequence ID" value="FBpp0302779"/>
    <property type="gene ID" value="FBgn0000667"/>
</dbReference>
<dbReference type="EnsemblMetazoa" id="FBtr0333801">
    <molecule id="P18091-4"/>
    <property type="protein sequence ID" value="FBpp0305935"/>
    <property type="gene ID" value="FBgn0000667"/>
</dbReference>
<dbReference type="EnsemblMetazoa" id="FBtr0333802">
    <molecule id="P18091-3"/>
    <property type="protein sequence ID" value="FBpp0305936"/>
    <property type="gene ID" value="FBgn0000667"/>
</dbReference>
<dbReference type="GeneID" id="31166"/>
<dbReference type="KEGG" id="dme:Dmel_CG4376"/>
<dbReference type="AGR" id="FB:FBgn0000667"/>
<dbReference type="CTD" id="31166"/>
<dbReference type="FlyBase" id="FBgn0000667">
    <property type="gene designation" value="Actn"/>
</dbReference>
<dbReference type="VEuPathDB" id="VectorBase:FBgn0000667"/>
<dbReference type="eggNOG" id="KOG0035">
    <property type="taxonomic scope" value="Eukaryota"/>
</dbReference>
<dbReference type="GeneTree" id="ENSGT00940000155548"/>
<dbReference type="InParanoid" id="P18091"/>
<dbReference type="OMA" id="QQRWITV"/>
<dbReference type="OrthoDB" id="18853at2759"/>
<dbReference type="PhylomeDB" id="P18091"/>
<dbReference type="Reactome" id="R-DME-114608">
    <property type="pathway name" value="Platelet degranulation"/>
</dbReference>
<dbReference type="Reactome" id="R-DME-438066">
    <property type="pathway name" value="Unblocking of NMDA receptors, glutamate binding and activation"/>
</dbReference>
<dbReference type="Reactome" id="R-DME-446388">
    <property type="pathway name" value="Regulation of cytoskeletal remodeling and cell spreading by IPP complex components"/>
</dbReference>
<dbReference type="Reactome" id="R-DME-9013405">
    <property type="pathway name" value="RHOD GTPase cycle"/>
</dbReference>
<dbReference type="Reactome" id="R-DME-9013418">
    <property type="pathway name" value="RHOBTB2 GTPase cycle"/>
</dbReference>
<dbReference type="Reactome" id="R-DME-9035034">
    <property type="pathway name" value="RHOF GTPase cycle"/>
</dbReference>
<dbReference type="SignaLink" id="P18091"/>
<dbReference type="BioGRID-ORCS" id="31166">
    <property type="hits" value="0 hits in 3 CRISPR screens"/>
</dbReference>
<dbReference type="ChiTaRS" id="Actn">
    <property type="organism name" value="fly"/>
</dbReference>
<dbReference type="GenomeRNAi" id="31166"/>
<dbReference type="PRO" id="PR:P18091"/>
<dbReference type="Proteomes" id="UP000000803">
    <property type="component" value="Chromosome X"/>
</dbReference>
<dbReference type="Bgee" id="FBgn0000667">
    <property type="expression patterns" value="Expressed in muscle cell in body wall and 216 other cell types or tissues"/>
</dbReference>
<dbReference type="ExpressionAtlas" id="P18091">
    <property type="expression patterns" value="baseline and differential"/>
</dbReference>
<dbReference type="GO" id="GO:0030054">
    <property type="term" value="C:cell junction"/>
    <property type="evidence" value="ECO:0000318"/>
    <property type="project" value="GO_Central"/>
</dbReference>
<dbReference type="GO" id="GO:0042995">
    <property type="term" value="C:cell projection"/>
    <property type="evidence" value="ECO:0000318"/>
    <property type="project" value="GO_Central"/>
</dbReference>
<dbReference type="GO" id="GO:0030864">
    <property type="term" value="C:cortical actin cytoskeleton"/>
    <property type="evidence" value="ECO:0000318"/>
    <property type="project" value="GO_Central"/>
</dbReference>
<dbReference type="GO" id="GO:0005925">
    <property type="term" value="C:focal adhesion"/>
    <property type="evidence" value="ECO:0000250"/>
    <property type="project" value="FlyBase"/>
</dbReference>
<dbReference type="GO" id="GO:0005886">
    <property type="term" value="C:plasma membrane"/>
    <property type="evidence" value="ECO:0000318"/>
    <property type="project" value="GO_Central"/>
</dbReference>
<dbReference type="GO" id="GO:0030018">
    <property type="term" value="C:Z disc"/>
    <property type="evidence" value="ECO:0000314"/>
    <property type="project" value="FlyBase"/>
</dbReference>
<dbReference type="GO" id="GO:0003779">
    <property type="term" value="F:actin binding"/>
    <property type="evidence" value="ECO:0000353"/>
    <property type="project" value="UniProtKB"/>
</dbReference>
<dbReference type="GO" id="GO:0051015">
    <property type="term" value="F:actin filament binding"/>
    <property type="evidence" value="ECO:0000315"/>
    <property type="project" value="UniProtKB"/>
</dbReference>
<dbReference type="GO" id="GO:0005509">
    <property type="term" value="F:calcium ion binding"/>
    <property type="evidence" value="ECO:0007669"/>
    <property type="project" value="InterPro"/>
</dbReference>
<dbReference type="GO" id="GO:0030036">
    <property type="term" value="P:actin cytoskeleton organization"/>
    <property type="evidence" value="ECO:0000315"/>
    <property type="project" value="FlyBase"/>
</dbReference>
<dbReference type="GO" id="GO:0051017">
    <property type="term" value="P:actin filament bundle assembly"/>
    <property type="evidence" value="ECO:0000315"/>
    <property type="project" value="UniProtKB"/>
</dbReference>
<dbReference type="GO" id="GO:0055001">
    <property type="term" value="P:muscle cell development"/>
    <property type="evidence" value="ECO:0000318"/>
    <property type="project" value="GO_Central"/>
</dbReference>
<dbReference type="GO" id="GO:0045214">
    <property type="term" value="P:sarcomere organization"/>
    <property type="evidence" value="ECO:0000314"/>
    <property type="project" value="FlyBase"/>
</dbReference>
<dbReference type="CDD" id="cd21214">
    <property type="entry name" value="CH_ACTN_rpt1"/>
    <property type="match status" value="1"/>
</dbReference>
<dbReference type="CDD" id="cd21216">
    <property type="entry name" value="CH_ACTN_rpt2"/>
    <property type="match status" value="1"/>
</dbReference>
<dbReference type="CDD" id="cd00051">
    <property type="entry name" value="EFh"/>
    <property type="match status" value="1"/>
</dbReference>
<dbReference type="CDD" id="cd00176">
    <property type="entry name" value="SPEC"/>
    <property type="match status" value="3"/>
</dbReference>
<dbReference type="FunFam" id="1.10.238.10:FF:000004">
    <property type="entry name" value="Actinin alpha 1"/>
    <property type="match status" value="1"/>
</dbReference>
<dbReference type="FunFam" id="1.10.418.10:FF:000001">
    <property type="entry name" value="Actinin alpha 1"/>
    <property type="match status" value="1"/>
</dbReference>
<dbReference type="FunFam" id="1.20.58.60:FF:000004">
    <property type="entry name" value="Actinin alpha 1"/>
    <property type="match status" value="1"/>
</dbReference>
<dbReference type="FunFam" id="1.20.58.60:FF:000005">
    <property type="entry name" value="Actinin alpha 1"/>
    <property type="match status" value="1"/>
</dbReference>
<dbReference type="FunFam" id="1.10.418.10:FF:000005">
    <property type="entry name" value="Actinin alpha 4"/>
    <property type="match status" value="1"/>
</dbReference>
<dbReference type="FunFam" id="1.20.58.60:FF:000002">
    <property type="entry name" value="Actinin, alpha 1"/>
    <property type="match status" value="1"/>
</dbReference>
<dbReference type="FunFam" id="1.20.58.60:FF:000003">
    <property type="entry name" value="Actinin, alpha 1"/>
    <property type="match status" value="1"/>
</dbReference>
<dbReference type="FunFam" id="1.10.238.10:FF:000148">
    <property type="entry name" value="alpha-actinin, sarcomeric isoform X2"/>
    <property type="match status" value="1"/>
</dbReference>
<dbReference type="Gene3D" id="1.20.58.60">
    <property type="match status" value="4"/>
</dbReference>
<dbReference type="Gene3D" id="1.10.418.10">
    <property type="entry name" value="Calponin-like domain"/>
    <property type="match status" value="2"/>
</dbReference>
<dbReference type="Gene3D" id="1.10.238.10">
    <property type="entry name" value="EF-hand"/>
    <property type="match status" value="2"/>
</dbReference>
<dbReference type="InterPro" id="IPR001589">
    <property type="entry name" value="Actinin_actin-bd_CS"/>
</dbReference>
<dbReference type="InterPro" id="IPR001715">
    <property type="entry name" value="CH_dom"/>
</dbReference>
<dbReference type="InterPro" id="IPR036872">
    <property type="entry name" value="CH_dom_sf"/>
</dbReference>
<dbReference type="InterPro" id="IPR011992">
    <property type="entry name" value="EF-hand-dom_pair"/>
</dbReference>
<dbReference type="InterPro" id="IPR014837">
    <property type="entry name" value="EF-hand_Ca_insen"/>
</dbReference>
<dbReference type="InterPro" id="IPR018247">
    <property type="entry name" value="EF_Hand_1_Ca_BS"/>
</dbReference>
<dbReference type="InterPro" id="IPR002048">
    <property type="entry name" value="EF_hand_dom"/>
</dbReference>
<dbReference type="InterPro" id="IPR018159">
    <property type="entry name" value="Spectrin/alpha-actinin"/>
</dbReference>
<dbReference type="InterPro" id="IPR002017">
    <property type="entry name" value="Spectrin_repeat"/>
</dbReference>
<dbReference type="PANTHER" id="PTHR11915">
    <property type="entry name" value="SPECTRIN/FILAMIN RELATED CYTOSKELETAL PROTEIN"/>
    <property type="match status" value="1"/>
</dbReference>
<dbReference type="Pfam" id="PF00307">
    <property type="entry name" value="CH"/>
    <property type="match status" value="2"/>
</dbReference>
<dbReference type="Pfam" id="PF13405">
    <property type="entry name" value="EF-hand_6"/>
    <property type="match status" value="1"/>
</dbReference>
<dbReference type="Pfam" id="PF08726">
    <property type="entry name" value="EFhand_Ca_insen"/>
    <property type="match status" value="1"/>
</dbReference>
<dbReference type="Pfam" id="PF00435">
    <property type="entry name" value="Spectrin"/>
    <property type="match status" value="4"/>
</dbReference>
<dbReference type="SMART" id="SM00033">
    <property type="entry name" value="CH"/>
    <property type="match status" value="2"/>
</dbReference>
<dbReference type="SMART" id="SM00054">
    <property type="entry name" value="EFh"/>
    <property type="match status" value="2"/>
</dbReference>
<dbReference type="SMART" id="SM01184">
    <property type="entry name" value="efhand_Ca_insen"/>
    <property type="match status" value="1"/>
</dbReference>
<dbReference type="SMART" id="SM00150">
    <property type="entry name" value="SPEC"/>
    <property type="match status" value="4"/>
</dbReference>
<dbReference type="SUPFAM" id="SSF47576">
    <property type="entry name" value="Calponin-homology domain, CH-domain"/>
    <property type="match status" value="1"/>
</dbReference>
<dbReference type="SUPFAM" id="SSF47473">
    <property type="entry name" value="EF-hand"/>
    <property type="match status" value="1"/>
</dbReference>
<dbReference type="SUPFAM" id="SSF46966">
    <property type="entry name" value="Spectrin repeat"/>
    <property type="match status" value="4"/>
</dbReference>
<dbReference type="PROSITE" id="PS00019">
    <property type="entry name" value="ACTININ_1"/>
    <property type="match status" value="1"/>
</dbReference>
<dbReference type="PROSITE" id="PS00020">
    <property type="entry name" value="ACTININ_2"/>
    <property type="match status" value="1"/>
</dbReference>
<dbReference type="PROSITE" id="PS50021">
    <property type="entry name" value="CH"/>
    <property type="match status" value="2"/>
</dbReference>
<dbReference type="PROSITE" id="PS00018">
    <property type="entry name" value="EF_HAND_1"/>
    <property type="match status" value="1"/>
</dbReference>
<dbReference type="PROSITE" id="PS50222">
    <property type="entry name" value="EF_HAND_2"/>
    <property type="match status" value="2"/>
</dbReference>
<reference key="1">
    <citation type="journal article" date="1990" name="J. Cell Biol.">
        <title>Molecular genetics of Drosophila alpha-actinin: mutant alleles disrupt Z disc integrity and muscle insertions.</title>
        <authorList>
            <person name="Fyrberg E.A."/>
            <person name="Kelly M."/>
            <person name="Ball E."/>
            <person name="Fyrberg C."/>
            <person name="Reedy M.C."/>
        </authorList>
    </citation>
    <scope>NUCLEOTIDE SEQUENCE [MRNA] (ISOFORM ADULT MUSCLE)</scope>
    <scope>FUNCTION</scope>
    <source>
        <strain>Canton-S</strain>
    </source>
</reference>
<reference key="2">
    <citation type="journal article" date="2000" name="Science">
        <title>The genome sequence of Drosophila melanogaster.</title>
        <authorList>
            <person name="Adams M.D."/>
            <person name="Celniker S.E."/>
            <person name="Holt R.A."/>
            <person name="Evans C.A."/>
            <person name="Gocayne J.D."/>
            <person name="Amanatides P.G."/>
            <person name="Scherer S.E."/>
            <person name="Li P.W."/>
            <person name="Hoskins R.A."/>
            <person name="Galle R.F."/>
            <person name="George R.A."/>
            <person name="Lewis S.E."/>
            <person name="Richards S."/>
            <person name="Ashburner M."/>
            <person name="Henderson S.N."/>
            <person name="Sutton G.G."/>
            <person name="Wortman J.R."/>
            <person name="Yandell M.D."/>
            <person name="Zhang Q."/>
            <person name="Chen L.X."/>
            <person name="Brandon R.C."/>
            <person name="Rogers Y.-H.C."/>
            <person name="Blazej R.G."/>
            <person name="Champe M."/>
            <person name="Pfeiffer B.D."/>
            <person name="Wan K.H."/>
            <person name="Doyle C."/>
            <person name="Baxter E.G."/>
            <person name="Helt G."/>
            <person name="Nelson C.R."/>
            <person name="Miklos G.L.G."/>
            <person name="Abril J.F."/>
            <person name="Agbayani A."/>
            <person name="An H.-J."/>
            <person name="Andrews-Pfannkoch C."/>
            <person name="Baldwin D."/>
            <person name="Ballew R.M."/>
            <person name="Basu A."/>
            <person name="Baxendale J."/>
            <person name="Bayraktaroglu L."/>
            <person name="Beasley E.M."/>
            <person name="Beeson K.Y."/>
            <person name="Benos P.V."/>
            <person name="Berman B.P."/>
            <person name="Bhandari D."/>
            <person name="Bolshakov S."/>
            <person name="Borkova D."/>
            <person name="Botchan M.R."/>
            <person name="Bouck J."/>
            <person name="Brokstein P."/>
            <person name="Brottier P."/>
            <person name="Burtis K.C."/>
            <person name="Busam D.A."/>
            <person name="Butler H."/>
            <person name="Cadieu E."/>
            <person name="Center A."/>
            <person name="Chandra I."/>
            <person name="Cherry J.M."/>
            <person name="Cawley S."/>
            <person name="Dahlke C."/>
            <person name="Davenport L.B."/>
            <person name="Davies P."/>
            <person name="de Pablos B."/>
            <person name="Delcher A."/>
            <person name="Deng Z."/>
            <person name="Mays A.D."/>
            <person name="Dew I."/>
            <person name="Dietz S.M."/>
            <person name="Dodson K."/>
            <person name="Doup L.E."/>
            <person name="Downes M."/>
            <person name="Dugan-Rocha S."/>
            <person name="Dunkov B.C."/>
            <person name="Dunn P."/>
            <person name="Durbin K.J."/>
            <person name="Evangelista C.C."/>
            <person name="Ferraz C."/>
            <person name="Ferriera S."/>
            <person name="Fleischmann W."/>
            <person name="Fosler C."/>
            <person name="Gabrielian A.E."/>
            <person name="Garg N.S."/>
            <person name="Gelbart W.M."/>
            <person name="Glasser K."/>
            <person name="Glodek A."/>
            <person name="Gong F."/>
            <person name="Gorrell J.H."/>
            <person name="Gu Z."/>
            <person name="Guan P."/>
            <person name="Harris M."/>
            <person name="Harris N.L."/>
            <person name="Harvey D.A."/>
            <person name="Heiman T.J."/>
            <person name="Hernandez J.R."/>
            <person name="Houck J."/>
            <person name="Hostin D."/>
            <person name="Houston K.A."/>
            <person name="Howland T.J."/>
            <person name="Wei M.-H."/>
            <person name="Ibegwam C."/>
            <person name="Jalali M."/>
            <person name="Kalush F."/>
            <person name="Karpen G.H."/>
            <person name="Ke Z."/>
            <person name="Kennison J.A."/>
            <person name="Ketchum K.A."/>
            <person name="Kimmel B.E."/>
            <person name="Kodira C.D."/>
            <person name="Kraft C.L."/>
            <person name="Kravitz S."/>
            <person name="Kulp D."/>
            <person name="Lai Z."/>
            <person name="Lasko P."/>
            <person name="Lei Y."/>
            <person name="Levitsky A.A."/>
            <person name="Li J.H."/>
            <person name="Li Z."/>
            <person name="Liang Y."/>
            <person name="Lin X."/>
            <person name="Liu X."/>
            <person name="Mattei B."/>
            <person name="McIntosh T.C."/>
            <person name="McLeod M.P."/>
            <person name="McPherson D."/>
            <person name="Merkulov G."/>
            <person name="Milshina N.V."/>
            <person name="Mobarry C."/>
            <person name="Morris J."/>
            <person name="Moshrefi A."/>
            <person name="Mount S.M."/>
            <person name="Moy M."/>
            <person name="Murphy B."/>
            <person name="Murphy L."/>
            <person name="Muzny D.M."/>
            <person name="Nelson D.L."/>
            <person name="Nelson D.R."/>
            <person name="Nelson K.A."/>
            <person name="Nixon K."/>
            <person name="Nusskern D.R."/>
            <person name="Pacleb J.M."/>
            <person name="Palazzolo M."/>
            <person name="Pittman G.S."/>
            <person name="Pan S."/>
            <person name="Pollard J."/>
            <person name="Puri V."/>
            <person name="Reese M.G."/>
            <person name="Reinert K."/>
            <person name="Remington K."/>
            <person name="Saunders R.D.C."/>
            <person name="Scheeler F."/>
            <person name="Shen H."/>
            <person name="Shue B.C."/>
            <person name="Siden-Kiamos I."/>
            <person name="Simpson M."/>
            <person name="Skupski M.P."/>
            <person name="Smith T.J."/>
            <person name="Spier E."/>
            <person name="Spradling A.C."/>
            <person name="Stapleton M."/>
            <person name="Strong R."/>
            <person name="Sun E."/>
            <person name="Svirskas R."/>
            <person name="Tector C."/>
            <person name="Turner R."/>
            <person name="Venter E."/>
            <person name="Wang A.H."/>
            <person name="Wang X."/>
            <person name="Wang Z.-Y."/>
            <person name="Wassarman D.A."/>
            <person name="Weinstock G.M."/>
            <person name="Weissenbach J."/>
            <person name="Williams S.M."/>
            <person name="Woodage T."/>
            <person name="Worley K.C."/>
            <person name="Wu D."/>
            <person name="Yang S."/>
            <person name="Yao Q.A."/>
            <person name="Ye J."/>
            <person name="Yeh R.-F."/>
            <person name="Zaveri J.S."/>
            <person name="Zhan M."/>
            <person name="Zhang G."/>
            <person name="Zhao Q."/>
            <person name="Zheng L."/>
            <person name="Zheng X.H."/>
            <person name="Zhong F.N."/>
            <person name="Zhong W."/>
            <person name="Zhou X."/>
            <person name="Zhu S.C."/>
            <person name="Zhu X."/>
            <person name="Smith H.O."/>
            <person name="Gibbs R.A."/>
            <person name="Myers E.W."/>
            <person name="Rubin G.M."/>
            <person name="Venter J.C."/>
        </authorList>
    </citation>
    <scope>NUCLEOTIDE SEQUENCE [LARGE SCALE GENOMIC DNA]</scope>
    <source>
        <strain>Berkeley</strain>
    </source>
</reference>
<reference key="3">
    <citation type="journal article" date="2002" name="Genome Biol.">
        <title>Annotation of the Drosophila melanogaster euchromatic genome: a systematic review.</title>
        <authorList>
            <person name="Misra S."/>
            <person name="Crosby M.A."/>
            <person name="Mungall C.J."/>
            <person name="Matthews B.B."/>
            <person name="Campbell K.S."/>
            <person name="Hradecky P."/>
            <person name="Huang Y."/>
            <person name="Kaminker J.S."/>
            <person name="Millburn G.H."/>
            <person name="Prochnik S.E."/>
            <person name="Smith C.D."/>
            <person name="Tupy J.L."/>
            <person name="Whitfield E.J."/>
            <person name="Bayraktaroglu L."/>
            <person name="Berman B.P."/>
            <person name="Bettencourt B.R."/>
            <person name="Celniker S.E."/>
            <person name="de Grey A.D.N.J."/>
            <person name="Drysdale R.A."/>
            <person name="Harris N.L."/>
            <person name="Richter J."/>
            <person name="Russo S."/>
            <person name="Schroeder A.J."/>
            <person name="Shu S.Q."/>
            <person name="Stapleton M."/>
            <person name="Yamada C."/>
            <person name="Ashburner M."/>
            <person name="Gelbart W.M."/>
            <person name="Rubin G.M."/>
            <person name="Lewis S.E."/>
        </authorList>
    </citation>
    <scope>GENOME REANNOTATION</scope>
    <scope>ALTERNATIVE SPLICING</scope>
    <source>
        <strain>Berkeley</strain>
    </source>
</reference>
<reference key="4">
    <citation type="journal article" date="2000" name="Science">
        <title>From sequence to chromosome: the tip of the X chromosome of D. melanogaster.</title>
        <authorList>
            <person name="Benos P.V."/>
            <person name="Gatt M.K."/>
            <person name="Ashburner M."/>
            <person name="Murphy L."/>
            <person name="Harris D."/>
            <person name="Barrell B.G."/>
            <person name="Ferraz C."/>
            <person name="Vidal S."/>
            <person name="Brun C."/>
            <person name="Demailles J."/>
            <person name="Cadieu E."/>
            <person name="Dreano S."/>
            <person name="Gloux S."/>
            <person name="Lelaure V."/>
            <person name="Mottier S."/>
            <person name="Galibert F."/>
            <person name="Borkova D."/>
            <person name="Minana B."/>
            <person name="Kafatos F.C."/>
            <person name="Louis C."/>
            <person name="Siden-Kiamos I."/>
            <person name="Bolshakov S."/>
            <person name="Papagiannakis G."/>
            <person name="Spanos L."/>
            <person name="Cox S."/>
            <person name="Madueno E."/>
            <person name="de Pablos B."/>
            <person name="Modolell J."/>
            <person name="Peter A."/>
            <person name="Schoettler P."/>
            <person name="Werner M."/>
            <person name="Mourkioti F."/>
            <person name="Beinert N."/>
            <person name="Dowe G."/>
            <person name="Schaefer U."/>
            <person name="Jaeckle H."/>
            <person name="Bucheton A."/>
            <person name="Callister D.M."/>
            <person name="Campbell L.A."/>
            <person name="Darlamitsou A."/>
            <person name="Henderson N.S."/>
            <person name="McMillan P.J."/>
            <person name="Salles C."/>
            <person name="Tait E.A."/>
            <person name="Valenti P."/>
            <person name="Saunders R.D.C."/>
            <person name="Glover D.M."/>
        </authorList>
    </citation>
    <scope>NUCLEOTIDE SEQUENCE [LARGE SCALE GENOMIC DNA] (ISOFORMS LONG AND ADULT MUSCLE)</scope>
    <source>
        <strain>Oregon-R</strain>
    </source>
</reference>
<reference key="5">
    <citation type="journal article" date="2002" name="Genome Biol.">
        <title>A Drosophila full-length cDNA resource.</title>
        <authorList>
            <person name="Stapleton M."/>
            <person name="Carlson J.W."/>
            <person name="Brokstein P."/>
            <person name="Yu C."/>
            <person name="Champe M."/>
            <person name="George R.A."/>
            <person name="Guarin H."/>
            <person name="Kronmiller B."/>
            <person name="Pacleb J.M."/>
            <person name="Park S."/>
            <person name="Wan K.H."/>
            <person name="Rubin G.M."/>
            <person name="Celniker S.E."/>
        </authorList>
    </citation>
    <scope>NUCLEOTIDE SEQUENCE [LARGE SCALE MRNA] (ISOFORM A)</scope>
    <source>
        <strain>Berkeley</strain>
        <tissue>Embryo</tissue>
    </source>
</reference>
<reference key="6">
    <citation type="journal article" date="1992" name="J. Cell Biol.">
        <title>Perturbations of Drosophila alpha-actinin cause muscle paralysis, weakness, and atrophy but do not confer obvious nonmuscle phenotypes.</title>
        <authorList>
            <person name="Roulier E.M."/>
            <person name="Fyrberg C."/>
            <person name="Fyrberg E."/>
        </authorList>
    </citation>
    <scope>NUCLEOTIDE SEQUENCE [MRNA] OF 229-286 (ISOFORM NON-MUSCLE)</scope>
    <scope>ALTERNATIVE SPLICING</scope>
    <scope>FUNCTION</scope>
    <scope>TISSUE SPECIFICITY</scope>
    <scope>DEVELOPMENTAL STAGE</scope>
    <source>
        <strain>Oregon-R</strain>
        <tissue>Embryo</tissue>
    </source>
</reference>
<reference key="7">
    <citation type="journal article" date="2007" name="J. Cell Biol.">
        <title>A Drosophila melanogaster model of spinal muscular atrophy reveals a function for SMN in striated muscle.</title>
        <authorList>
            <person name="Rajendra T.K."/>
            <person name="Gonsalvez G.B."/>
            <person name="Walker M.P."/>
            <person name="Shpargel K.B."/>
            <person name="Salz H.K."/>
            <person name="Matera A.G."/>
        </authorList>
    </citation>
    <scope>INTERACTION WITH SMN</scope>
    <scope>SUBCELLULAR LOCATION</scope>
    <scope>TISSUE SPECIFICITY</scope>
</reference>
<comment type="function">
    <text evidence="3 5">F-actin cross-linking protein which is thought to anchor actin to a variety of intracellular structures. This is a bundling protein.</text>
</comment>
<comment type="subunit">
    <text evidence="4">Homodimer; antiparallel. Interacts with Smn; the interaction occurs in adult thoracic tissues.</text>
</comment>
<comment type="subcellular location">
    <subcellularLocation>
        <location evidence="4">Cytoplasm</location>
        <location evidence="4">Myofibril</location>
        <location evidence="4">Sarcomere</location>
        <location evidence="4">Z line</location>
    </subcellularLocation>
    <text>Colocalizes with Smn at the Z-line of indirect flight muscles.</text>
</comment>
<comment type="alternative products">
    <event type="alternative splicing"/>
    <isoform>
        <id>P18091-1</id>
        <name>Long</name>
        <sequence type="displayed"/>
    </isoform>
    <isoform>
        <id>P18091-2</id>
        <name>Non-muscle</name>
        <sequence type="described" ref="VSP_000712 VSP_000714"/>
    </isoform>
    <isoform>
        <id>P18091-3</id>
        <name>Larval muscle</name>
        <name>C</name>
        <sequence type="described" ref="VSP_000716"/>
    </isoform>
    <isoform>
        <id>P18091-4</id>
        <name>Adult muscle</name>
        <name>B</name>
        <sequence type="described" ref="VSP_000715"/>
    </isoform>
    <isoform>
        <id>P18091-5</id>
        <name>A</name>
        <sequence type="described" ref="VSP_000713"/>
    </isoform>
    <text>Experimental confirmation may be lacking for some isoforms.</text>
</comment>
<comment type="tissue specificity">
    <text evidence="3 4">Larval muscle isoform is expressed in the larval body wall, adult muscles of the head and abdomen and supercontractile muscles of the larva and adult. Adult muscle isoform accumulates within adult fibrillar and tubular muscles.</text>
</comment>
<comment type="developmental stage">
    <text evidence="3">Larval muscle isoform is found in the larvae and adults, the adult muscle isoform in adults only.</text>
</comment>
<comment type="similarity">
    <text evidence="9">Belongs to the alpha-actinin family.</text>
</comment>
<evidence type="ECO:0000255" key="1">
    <source>
        <dbReference type="PROSITE-ProRule" id="PRU00044"/>
    </source>
</evidence>
<evidence type="ECO:0000255" key="2">
    <source>
        <dbReference type="PROSITE-ProRule" id="PRU00448"/>
    </source>
</evidence>
<evidence type="ECO:0000269" key="3">
    <source>
    </source>
</evidence>
<evidence type="ECO:0000269" key="4">
    <source>
    </source>
</evidence>
<evidence type="ECO:0000269" key="5">
    <source>
    </source>
</evidence>
<evidence type="ECO:0000303" key="6">
    <source>
    </source>
</evidence>
<evidence type="ECO:0000303" key="7">
    <source>
    </source>
</evidence>
<evidence type="ECO:0000303" key="8">
    <source>
    </source>
</evidence>
<evidence type="ECO:0000305" key="9"/>
<protein>
    <recommendedName>
        <fullName>Alpha-actinin, sarcomeric</fullName>
    </recommendedName>
    <alternativeName>
        <fullName>F-actin cross-linking protein</fullName>
    </alternativeName>
</protein>
<name>ACTN_DROME</name>
<organism>
    <name type="scientific">Drosophila melanogaster</name>
    <name type="common">Fruit fly</name>
    <dbReference type="NCBI Taxonomy" id="7227"/>
    <lineage>
        <taxon>Eukaryota</taxon>
        <taxon>Metazoa</taxon>
        <taxon>Ecdysozoa</taxon>
        <taxon>Arthropoda</taxon>
        <taxon>Hexapoda</taxon>
        <taxon>Insecta</taxon>
        <taxon>Pterygota</taxon>
        <taxon>Neoptera</taxon>
        <taxon>Endopterygota</taxon>
        <taxon>Diptera</taxon>
        <taxon>Brachycera</taxon>
        <taxon>Muscomorpha</taxon>
        <taxon>Ephydroidea</taxon>
        <taxon>Drosophilidae</taxon>
        <taxon>Drosophila</taxon>
        <taxon>Sophophora</taxon>
    </lineage>
</organism>
<gene>
    <name type="primary">Actn</name>
    <name type="synonym">fliA</name>
    <name type="synonym">l(1)2Cb</name>
    <name type="ORF">CG4376</name>
</gene>
<proteinExistence type="evidence at protein level"/>